<keyword id="KW-0227">DNA damage</keyword>
<keyword id="KW-0234">DNA repair</keyword>
<keyword id="KW-0255">Endonuclease</keyword>
<keyword id="KW-0269">Exonuclease</keyword>
<keyword id="KW-0378">Hydrolase</keyword>
<keyword id="KW-0464">Manganese</keyword>
<keyword id="KW-0479">Metal-binding</keyword>
<keyword id="KW-0540">Nuclease</keyword>
<keyword id="KW-1185">Reference proteome</keyword>
<accession>Q8TRL2</accession>
<comment type="function">
    <text evidence="1">Part of the Rad50/Mre11 complex, which is involved in the early steps of DNA double-strand break (DSB) repair. The complex may facilitate opening of the processed DNA ends to aid in the recruitment of HerA and NurA. Mre11 binds to DSB ends and has both double-stranded 3'-5' exonuclease activity and single-stranded endonuclease activity.</text>
</comment>
<comment type="cofactor">
    <cofactor evidence="1">
        <name>Mn(2+)</name>
        <dbReference type="ChEBI" id="CHEBI:29035"/>
    </cofactor>
    <text evidence="1">Binds 2 manganese ions per subunit.</text>
</comment>
<comment type="activity regulation">
    <text evidence="1">Nuclease activity is regulated by Rad50.</text>
</comment>
<comment type="subunit">
    <text evidence="1">Homodimer. Forms a heterotetramer composed of two Mre11 subunits and two Rad50 subunits.</text>
</comment>
<comment type="similarity">
    <text evidence="1">Belongs to the MRE11/RAD32 family.</text>
</comment>
<sequence>MDREIRILHTADTHLGYRQYHSEVRRQDFFKAFETVIQDAVDMQVDAVVHAGDLFDSRNPTLEDLLETMNILSRLKAVDIPFFGIVGNHESKQNTQWLDLFEEMGLAERLGKTPKLVGNTTIYGIDSVPKSKIPLYDYSGFELPDSLPENCKKLLVMHQIVQPFPYADWDCAEVLENLPFKVDAILLGDYHKYEKIKVGEEETWATYSGSTERNSASENEPRSYNIITLSGEGLEISRRTIPTRNFLFITAKIDGEEKPYEQIFSAINEHLEEIPESVVFLDISGNSDSVLSFSEIEEYLLSKGALVSKVKDARIKETLPEEVAKVAFSDPDHAVAEEIRRMSLNDGGLIVDEIIRSPDVVRSRVDEETENRLLRLIETIDFEDPDFRIEIPASPISSTDSIDPVSPINHPVSSADSVSAVSPESSADHVSPDIIENNEKPIPAVEAEKIETLDPAGETEFVAGIAGKTETFRAPVRIKNSESLNEALKKSYEAPDKVREAPDVNPEPPEPLPAFKNIGSPETFGSCETTVSSEVPEKGGERTELEDDAVNKTEKETGKLSGFGVEAGSEKEDADRIEKPAHVPDKAEKPVKQSQRKGKGKSAVPRQYNLGDYL</sequence>
<name>MRE11_METAC</name>
<feature type="chain" id="PRO_0000138688" description="DNA double-strand break repair protein Mre11">
    <location>
        <begin position="1"/>
        <end position="614"/>
    </location>
</feature>
<feature type="region of interest" description="Disordered" evidence="2">
    <location>
        <begin position="393"/>
        <end position="434"/>
    </location>
</feature>
<feature type="region of interest" description="Disordered" evidence="2">
    <location>
        <begin position="487"/>
        <end position="614"/>
    </location>
</feature>
<feature type="compositionally biased region" description="Low complexity" evidence="2">
    <location>
        <begin position="411"/>
        <end position="425"/>
    </location>
</feature>
<feature type="compositionally biased region" description="Basic and acidic residues" evidence="2">
    <location>
        <begin position="487"/>
        <end position="502"/>
    </location>
</feature>
<feature type="compositionally biased region" description="Basic and acidic residues" evidence="2">
    <location>
        <begin position="535"/>
        <end position="558"/>
    </location>
</feature>
<feature type="compositionally biased region" description="Basic and acidic residues" evidence="2">
    <location>
        <begin position="568"/>
        <end position="591"/>
    </location>
</feature>
<feature type="active site" description="Proton donor" evidence="1">
    <location>
        <position position="89"/>
    </location>
</feature>
<feature type="binding site" evidence="1">
    <location>
        <position position="12"/>
    </location>
    <ligand>
        <name>Mn(2+)</name>
        <dbReference type="ChEBI" id="CHEBI:29035"/>
        <label>1</label>
    </ligand>
</feature>
<feature type="binding site" evidence="1">
    <location>
        <position position="14"/>
    </location>
    <ligand>
        <name>Mn(2+)</name>
        <dbReference type="ChEBI" id="CHEBI:29035"/>
        <label>1</label>
    </ligand>
</feature>
<feature type="binding site" evidence="1">
    <location>
        <position position="53"/>
    </location>
    <ligand>
        <name>Mn(2+)</name>
        <dbReference type="ChEBI" id="CHEBI:29035"/>
        <label>1</label>
    </ligand>
</feature>
<feature type="binding site" evidence="1">
    <location>
        <position position="53"/>
    </location>
    <ligand>
        <name>Mn(2+)</name>
        <dbReference type="ChEBI" id="CHEBI:29035"/>
        <label>2</label>
    </ligand>
</feature>
<feature type="binding site" evidence="1">
    <location>
        <position position="88"/>
    </location>
    <ligand>
        <name>Mn(2+)</name>
        <dbReference type="ChEBI" id="CHEBI:29035"/>
        <label>2</label>
    </ligand>
</feature>
<feature type="binding site" evidence="1">
    <location>
        <position position="158"/>
    </location>
    <ligand>
        <name>Mn(2+)</name>
        <dbReference type="ChEBI" id="CHEBI:29035"/>
        <label>2</label>
    </ligand>
</feature>
<feature type="binding site" evidence="1">
    <location>
        <position position="189"/>
    </location>
    <ligand>
        <name>Mn(2+)</name>
        <dbReference type="ChEBI" id="CHEBI:29035"/>
        <label>2</label>
    </ligand>
</feature>
<feature type="binding site" evidence="1">
    <location>
        <position position="191"/>
    </location>
    <ligand>
        <name>Mn(2+)</name>
        <dbReference type="ChEBI" id="CHEBI:29035"/>
        <label>1</label>
    </ligand>
</feature>
<reference key="1">
    <citation type="journal article" date="2002" name="Genome Res.">
        <title>The genome of Methanosarcina acetivorans reveals extensive metabolic and physiological diversity.</title>
        <authorList>
            <person name="Galagan J.E."/>
            <person name="Nusbaum C."/>
            <person name="Roy A."/>
            <person name="Endrizzi M.G."/>
            <person name="Macdonald P."/>
            <person name="FitzHugh W."/>
            <person name="Calvo S."/>
            <person name="Engels R."/>
            <person name="Smirnov S."/>
            <person name="Atnoor D."/>
            <person name="Brown A."/>
            <person name="Allen N."/>
            <person name="Naylor J."/>
            <person name="Stange-Thomann N."/>
            <person name="DeArellano K."/>
            <person name="Johnson R."/>
            <person name="Linton L."/>
            <person name="McEwan P."/>
            <person name="McKernan K."/>
            <person name="Talamas J."/>
            <person name="Tirrell A."/>
            <person name="Ye W."/>
            <person name="Zimmer A."/>
            <person name="Barber R.D."/>
            <person name="Cann I."/>
            <person name="Graham D.E."/>
            <person name="Grahame D.A."/>
            <person name="Guss A.M."/>
            <person name="Hedderich R."/>
            <person name="Ingram-Smith C."/>
            <person name="Kuettner H.C."/>
            <person name="Krzycki J.A."/>
            <person name="Leigh J.A."/>
            <person name="Li W."/>
            <person name="Liu J."/>
            <person name="Mukhopadhyay B."/>
            <person name="Reeve J.N."/>
            <person name="Smith K."/>
            <person name="Springer T.A."/>
            <person name="Umayam L.A."/>
            <person name="White O."/>
            <person name="White R.H."/>
            <person name="de Macario E.C."/>
            <person name="Ferry J.G."/>
            <person name="Jarrell K.F."/>
            <person name="Jing H."/>
            <person name="Macario A.J.L."/>
            <person name="Paulsen I.T."/>
            <person name="Pritchett M."/>
            <person name="Sowers K.R."/>
            <person name="Swanson R.V."/>
            <person name="Zinder S.H."/>
            <person name="Lander E."/>
            <person name="Metcalf W.W."/>
            <person name="Birren B."/>
        </authorList>
    </citation>
    <scope>NUCLEOTIDE SEQUENCE [LARGE SCALE GENOMIC DNA]</scope>
    <source>
        <strain>ATCC 35395 / DSM 2834 / JCM 12185 / C2A</strain>
    </source>
</reference>
<protein>
    <recommendedName>
        <fullName evidence="1">DNA double-strand break repair protein Mre11</fullName>
        <ecNumber evidence="1">3.1.-.-</ecNumber>
    </recommendedName>
</protein>
<gene>
    <name evidence="1" type="primary">mre11</name>
    <name type="ordered locus">MA_1163</name>
</gene>
<dbReference type="EC" id="3.1.-.-" evidence="1"/>
<dbReference type="EMBL" id="AE010299">
    <property type="protein sequence ID" value="AAM04584.1"/>
    <property type="molecule type" value="Genomic_DNA"/>
</dbReference>
<dbReference type="RefSeq" id="WP_011021187.1">
    <property type="nucleotide sequence ID" value="NC_003552.1"/>
</dbReference>
<dbReference type="SMR" id="Q8TRL2"/>
<dbReference type="STRING" id="188937.MA_1163"/>
<dbReference type="EnsemblBacteria" id="AAM04584">
    <property type="protein sequence ID" value="AAM04584"/>
    <property type="gene ID" value="MA_1163"/>
</dbReference>
<dbReference type="GeneID" id="1473051"/>
<dbReference type="KEGG" id="mac:MA_1163"/>
<dbReference type="HOGENOM" id="CLU_026621_3_1_2"/>
<dbReference type="InParanoid" id="Q8TRL2"/>
<dbReference type="OrthoDB" id="11638at2157"/>
<dbReference type="PhylomeDB" id="Q8TRL2"/>
<dbReference type="Proteomes" id="UP000002487">
    <property type="component" value="Chromosome"/>
</dbReference>
<dbReference type="GO" id="GO:0008408">
    <property type="term" value="F:3'-5' exonuclease activity"/>
    <property type="evidence" value="ECO:0007669"/>
    <property type="project" value="UniProtKB-UniRule"/>
</dbReference>
<dbReference type="GO" id="GO:0003677">
    <property type="term" value="F:DNA binding"/>
    <property type="evidence" value="ECO:0000318"/>
    <property type="project" value="GO_Central"/>
</dbReference>
<dbReference type="GO" id="GO:0045027">
    <property type="term" value="F:DNA end binding"/>
    <property type="evidence" value="ECO:0007669"/>
    <property type="project" value="UniProtKB-UniRule"/>
</dbReference>
<dbReference type="GO" id="GO:0004529">
    <property type="term" value="F:DNA exonuclease activity"/>
    <property type="evidence" value="ECO:0000318"/>
    <property type="project" value="GO_Central"/>
</dbReference>
<dbReference type="GO" id="GO:0004519">
    <property type="term" value="F:endonuclease activity"/>
    <property type="evidence" value="ECO:0007669"/>
    <property type="project" value="UniProtKB-UniRule"/>
</dbReference>
<dbReference type="GO" id="GO:0030145">
    <property type="term" value="F:manganese ion binding"/>
    <property type="evidence" value="ECO:0007669"/>
    <property type="project" value="UniProtKB-UniRule"/>
</dbReference>
<dbReference type="GO" id="GO:0000403">
    <property type="term" value="F:Y-form DNA binding"/>
    <property type="evidence" value="ECO:0007669"/>
    <property type="project" value="UniProtKB-UniRule"/>
</dbReference>
<dbReference type="GO" id="GO:0006281">
    <property type="term" value="P:DNA repair"/>
    <property type="evidence" value="ECO:0000318"/>
    <property type="project" value="GO_Central"/>
</dbReference>
<dbReference type="GO" id="GO:0006302">
    <property type="term" value="P:double-strand break repair"/>
    <property type="evidence" value="ECO:0007669"/>
    <property type="project" value="UniProtKB-UniRule"/>
</dbReference>
<dbReference type="CDD" id="cd00840">
    <property type="entry name" value="MPP_Mre11_N"/>
    <property type="match status" value="1"/>
</dbReference>
<dbReference type="FunFam" id="3.60.21.10:FF:000129">
    <property type="entry name" value="DNA double-strand break repair protein Mre11"/>
    <property type="match status" value="1"/>
</dbReference>
<dbReference type="Gene3D" id="3.60.21.10">
    <property type="match status" value="1"/>
</dbReference>
<dbReference type="HAMAP" id="MF_02044">
    <property type="entry name" value="Mre11"/>
    <property type="match status" value="1"/>
</dbReference>
<dbReference type="InterPro" id="IPR004843">
    <property type="entry name" value="Calcineurin-like_PHP_ApaH"/>
</dbReference>
<dbReference type="InterPro" id="IPR050535">
    <property type="entry name" value="DNA_Repair-Maintenance_Comp"/>
</dbReference>
<dbReference type="InterPro" id="IPR029052">
    <property type="entry name" value="Metallo-depent_PP-like"/>
</dbReference>
<dbReference type="InterPro" id="IPR032885">
    <property type="entry name" value="Mre11_archaea-type"/>
</dbReference>
<dbReference type="InterPro" id="IPR041796">
    <property type="entry name" value="Mre11_N"/>
</dbReference>
<dbReference type="PANTHER" id="PTHR30337">
    <property type="entry name" value="COMPONENT OF ATP-DEPENDENT DSDNA EXONUCLEASE"/>
    <property type="match status" value="1"/>
</dbReference>
<dbReference type="PANTHER" id="PTHR30337:SF0">
    <property type="entry name" value="NUCLEASE SBCCD SUBUNIT D"/>
    <property type="match status" value="1"/>
</dbReference>
<dbReference type="Pfam" id="PF00149">
    <property type="entry name" value="Metallophos"/>
    <property type="match status" value="1"/>
</dbReference>
<dbReference type="SUPFAM" id="SSF56300">
    <property type="entry name" value="Metallo-dependent phosphatases"/>
    <property type="match status" value="1"/>
</dbReference>
<proteinExistence type="inferred from homology"/>
<organism>
    <name type="scientific">Methanosarcina acetivorans (strain ATCC 35395 / DSM 2834 / JCM 12185 / C2A)</name>
    <dbReference type="NCBI Taxonomy" id="188937"/>
    <lineage>
        <taxon>Archaea</taxon>
        <taxon>Methanobacteriati</taxon>
        <taxon>Methanobacteriota</taxon>
        <taxon>Stenosarchaea group</taxon>
        <taxon>Methanomicrobia</taxon>
        <taxon>Methanosarcinales</taxon>
        <taxon>Methanosarcinaceae</taxon>
        <taxon>Methanosarcina</taxon>
    </lineage>
</organism>
<evidence type="ECO:0000255" key="1">
    <source>
        <dbReference type="HAMAP-Rule" id="MF_02044"/>
    </source>
</evidence>
<evidence type="ECO:0000256" key="2">
    <source>
        <dbReference type="SAM" id="MobiDB-lite"/>
    </source>
</evidence>